<evidence type="ECO:0000250" key="1">
    <source>
        <dbReference type="UniProtKB" id="P18077"/>
    </source>
</evidence>
<evidence type="ECO:0000305" key="2"/>
<dbReference type="EMBL" id="X55030">
    <property type="protein sequence ID" value="CAA38849.1"/>
    <property type="molecule type" value="mRNA"/>
</dbReference>
<dbReference type="EMBL" id="V01440">
    <property type="protein sequence ID" value="CAA24701.1"/>
    <property type="molecule type" value="mRNA"/>
</dbReference>
<dbReference type="PIR" id="S12711">
    <property type="entry name" value="R5XL32"/>
</dbReference>
<dbReference type="RefSeq" id="XP_018098083.1">
    <property type="nucleotide sequence ID" value="XM_018242594.1"/>
</dbReference>
<dbReference type="PDB" id="7OYC">
    <property type="method" value="EM"/>
    <property type="resolution" value="2.40 A"/>
    <property type="chains" value="f1=1-110"/>
</dbReference>
<dbReference type="PDBsum" id="7OYC"/>
<dbReference type="EMDB" id="EMD-13113"/>
<dbReference type="SMR" id="P02434"/>
<dbReference type="CD-CODE" id="78E86D56">
    <property type="entry name" value="Mitochondrial cloud"/>
</dbReference>
<dbReference type="Proteomes" id="UP000186698">
    <property type="component" value="Unplaced"/>
</dbReference>
<dbReference type="Bgee" id="108705784">
    <property type="expression patterns" value="Expressed in spleen and 19 other cell types or tissues"/>
</dbReference>
<dbReference type="GO" id="GO:0022625">
    <property type="term" value="C:cytosolic large ribosomal subunit"/>
    <property type="evidence" value="ECO:0000318"/>
    <property type="project" value="GO_Central"/>
</dbReference>
<dbReference type="GO" id="GO:0003735">
    <property type="term" value="F:structural constituent of ribosome"/>
    <property type="evidence" value="ECO:0000318"/>
    <property type="project" value="GO_Central"/>
</dbReference>
<dbReference type="GO" id="GO:0000049">
    <property type="term" value="F:tRNA binding"/>
    <property type="evidence" value="ECO:0007669"/>
    <property type="project" value="UniProtKB-KW"/>
</dbReference>
<dbReference type="GO" id="GO:0002181">
    <property type="term" value="P:cytoplasmic translation"/>
    <property type="evidence" value="ECO:0000318"/>
    <property type="project" value="GO_Central"/>
</dbReference>
<dbReference type="GO" id="GO:0042273">
    <property type="term" value="P:ribosomal large subunit biogenesis"/>
    <property type="evidence" value="ECO:0000318"/>
    <property type="project" value="GO_Central"/>
</dbReference>
<dbReference type="FunFam" id="2.40.10.190:FF:000005">
    <property type="entry name" value="60S ribosomal protein L35a"/>
    <property type="match status" value="1"/>
</dbReference>
<dbReference type="Gene3D" id="2.40.10.190">
    <property type="entry name" value="translation elongation factor selb, chain A, domain 4"/>
    <property type="match status" value="1"/>
</dbReference>
<dbReference type="HAMAP" id="MF_00573">
    <property type="entry name" value="Ribosomal_eL33"/>
    <property type="match status" value="1"/>
</dbReference>
<dbReference type="InterPro" id="IPR001780">
    <property type="entry name" value="Ribosomal_eL33"/>
</dbReference>
<dbReference type="InterPro" id="IPR018266">
    <property type="entry name" value="Ribosomal_eL33_CS"/>
</dbReference>
<dbReference type="InterPro" id="IPR038661">
    <property type="entry name" value="Ribosomal_eL33_sf"/>
</dbReference>
<dbReference type="InterPro" id="IPR009000">
    <property type="entry name" value="Transl_B-barrel_sf"/>
</dbReference>
<dbReference type="PANTHER" id="PTHR10902">
    <property type="entry name" value="60S RIBOSOMAL PROTEIN L35A"/>
    <property type="match status" value="1"/>
</dbReference>
<dbReference type="Pfam" id="PF01247">
    <property type="entry name" value="Ribosomal_L35Ae"/>
    <property type="match status" value="1"/>
</dbReference>
<dbReference type="SUPFAM" id="SSF50447">
    <property type="entry name" value="Translation proteins"/>
    <property type="match status" value="1"/>
</dbReference>
<dbReference type="PROSITE" id="PS01105">
    <property type="entry name" value="RIBOSOMAL_L35AE"/>
    <property type="match status" value="1"/>
</dbReference>
<feature type="chain" id="PRO_0000192801" description="Large ribosomal subunit protein eL33">
    <location>
        <begin position="1"/>
        <end position="110"/>
    </location>
</feature>
<feature type="sequence conflict" description="In Ref. 2; CAA24701." evidence="2" ref="2">
    <original>P</original>
    <variation>H</variation>
    <location>
        <position position="60"/>
    </location>
</feature>
<feature type="sequence conflict" description="In Ref. 2; CAA24701." evidence="2" ref="2">
    <original>A</original>
    <variation>T</variation>
    <location>
        <position position="86"/>
    </location>
</feature>
<feature type="sequence conflict" description="In Ref. 2; CAA24701." evidence="2" ref="2">
    <original>R</original>
    <variation>H</variation>
    <location>
        <position position="89"/>
    </location>
</feature>
<accession>P02434</accession>
<comment type="function">
    <text evidence="1">Component of the large ribosomal subunit. The ribosome is a large ribonucleoprotein complex responsible for the synthesis of proteins in the cell.</text>
</comment>
<comment type="subunit">
    <text evidence="1">Component of the large ribosomal subunit.</text>
</comment>
<comment type="subcellular location">
    <subcellularLocation>
        <location evidence="1">Cytoplasm</location>
    </subcellularLocation>
</comment>
<comment type="similarity">
    <text evidence="2">Belongs to the eukaryotic ribosomal protein eL33 family.</text>
</comment>
<gene>
    <name type="primary">rpl35a</name>
</gene>
<sequence>MSGRLWCKATFAGYKRGLRNQREHTALLKIEGVYARDETEFYFGKRCAYVYKAKNNTVTPGGKPNRTRVIWGKVTRAHGNSGMVRAKFRSNLPAKAIGHRIRVMLYPSRI</sequence>
<keyword id="KW-0002">3D-structure</keyword>
<keyword id="KW-0963">Cytoplasm</keyword>
<keyword id="KW-1185">Reference proteome</keyword>
<keyword id="KW-0687">Ribonucleoprotein</keyword>
<keyword id="KW-0689">Ribosomal protein</keyword>
<keyword id="KW-0694">RNA-binding</keyword>
<keyword id="KW-0820">tRNA-binding</keyword>
<protein>
    <recommendedName>
        <fullName evidence="2">Large ribosomal subunit protein eL33</fullName>
    </recommendedName>
    <alternativeName>
        <fullName>60S ribosomal protein L35a</fullName>
    </alternativeName>
    <alternativeName>
        <fullName>L32</fullName>
    </alternativeName>
</protein>
<proteinExistence type="evidence at protein level"/>
<name>RL35A_XENLA</name>
<organism>
    <name type="scientific">Xenopus laevis</name>
    <name type="common">African clawed frog</name>
    <dbReference type="NCBI Taxonomy" id="8355"/>
    <lineage>
        <taxon>Eukaryota</taxon>
        <taxon>Metazoa</taxon>
        <taxon>Chordata</taxon>
        <taxon>Craniata</taxon>
        <taxon>Vertebrata</taxon>
        <taxon>Euteleostomi</taxon>
        <taxon>Amphibia</taxon>
        <taxon>Batrachia</taxon>
        <taxon>Anura</taxon>
        <taxon>Pipoidea</taxon>
        <taxon>Pipidae</taxon>
        <taxon>Xenopodinae</taxon>
        <taxon>Xenopus</taxon>
        <taxon>Xenopus</taxon>
    </lineage>
</organism>
<reference key="1">
    <citation type="journal article" date="1990" name="Nucleic Acids Res.">
        <title>Structure of Xenopus laevis ribosomal protein L32 and its expression during development.</title>
        <authorList>
            <person name="Bagni C."/>
            <person name="Mariottini P."/>
            <person name="Annesi F."/>
            <person name="Amaldi F."/>
        </authorList>
    </citation>
    <scope>NUCLEOTIDE SEQUENCE [MRNA]</scope>
</reference>
<reference key="2">
    <citation type="journal article" date="1982" name="Gene">
        <title>Nucleotide sequences of cloned cDNA fragments specific for six Xenopus laevis ribosomal proteins.</title>
        <authorList>
            <person name="Amaldi F."/>
            <person name="Beccari E."/>
            <person name="Bozzoni I."/>
            <person name="Luo Z.-X."/>
            <person name="Pierandrei-Amaldi P."/>
        </authorList>
    </citation>
    <scope>NUCLEOTIDE SEQUENCE [MRNA] OF 41-110</scope>
</reference>